<comment type="function">
    <text evidence="1">Component of the cytochrome b6-f complex, which mediates electron transfer between photosystem II (PSII) and photosystem I (PSI), cyclic electron flow around PSI, and state transitions. PetL is important for photoautotrophic growth as well as for electron transfer efficiency and stability of the cytochrome b6-f complex.</text>
</comment>
<comment type="subunit">
    <text evidence="1">The 4 large subunits of the cytochrome b6-f complex are cytochrome b6, subunit IV (17 kDa polypeptide, PetD), cytochrome f and the Rieske protein, while the 4 small subunits are PetG, PetL, PetM and PetN. The complex functions as a dimer.</text>
</comment>
<comment type="subcellular location">
    <subcellularLocation>
        <location evidence="1">Plastid</location>
        <location evidence="1">Chloroplast thylakoid membrane</location>
        <topology evidence="1">Single-pass membrane protein</topology>
    </subcellularLocation>
</comment>
<comment type="RNA editing">
    <location>
        <position position="4" evidence="2"/>
    </location>
    <location>
        <position position="32" evidence="2"/>
    </location>
    <text>The stop codon at position 32 is created by RNA editing.</text>
</comment>
<comment type="similarity">
    <text evidence="1">Belongs to the PetL family.</text>
</comment>
<evidence type="ECO:0000255" key="1">
    <source>
        <dbReference type="HAMAP-Rule" id="MF_00433"/>
    </source>
</evidence>
<evidence type="ECO:0000269" key="2">
    <source>
    </source>
</evidence>
<proteinExistence type="evidence at transcript level"/>
<sequence length="31" mass="3554">MFTLLSYFAFLMLALTFTLALFVGLNKIQIL</sequence>
<protein>
    <recommendedName>
        <fullName evidence="1">Cytochrome b6-f complex subunit 6</fullName>
    </recommendedName>
    <alternativeName>
        <fullName evidence="1">Cytochrome b6-f complex subunit PetL</fullName>
    </alternativeName>
    <alternativeName>
        <fullName evidence="1">Cytochrome b6-f complex subunit VI</fullName>
    </alternativeName>
</protein>
<reference key="1">
    <citation type="journal article" date="2003" name="DNA Res.">
        <title>Complete nucleotide sequence of the chloroplast genome from a leptosporangiate fern, Adiantum capillus-veneris L.</title>
        <authorList>
            <person name="Wolf P.G."/>
            <person name="Rowe C.A."/>
            <person name="Sinclair R.B."/>
            <person name="Hasebe M."/>
        </authorList>
    </citation>
    <scope>NUCLEOTIDE SEQUENCE [LARGE SCALE GENOMIC DNA]</scope>
</reference>
<reference key="2">
    <citation type="journal article" date="2004" name="Gene">
        <title>High levels of RNA editing in a vascular plant chloroplast genome: analysis of transcripts from the fern Adiantum capillus-veneris.</title>
        <authorList>
            <person name="Wolf P.G."/>
            <person name="Rowe C.A."/>
            <person name="Hasebe M."/>
        </authorList>
    </citation>
    <scope>NUCLEOTIDE SEQUENCE [GENOMIC DNA]</scope>
    <scope>RNA EDITING</scope>
    <source>
        <tissue>Frond</tissue>
    </source>
</reference>
<geneLocation type="chloroplast"/>
<name>PETL_ADICA</name>
<dbReference type="EMBL" id="AY178864">
    <property type="protein sequence ID" value="AAP29409.2"/>
    <property type="molecule type" value="Genomic_DNA"/>
</dbReference>
<dbReference type="RefSeq" id="NP_848078.1">
    <property type="nucleotide sequence ID" value="NC_004766.1"/>
</dbReference>
<dbReference type="SMR" id="Q85FK4"/>
<dbReference type="GeneID" id="807404"/>
<dbReference type="GO" id="GO:0009535">
    <property type="term" value="C:chloroplast thylakoid membrane"/>
    <property type="evidence" value="ECO:0007669"/>
    <property type="project" value="UniProtKB-SubCell"/>
</dbReference>
<dbReference type="GO" id="GO:0009512">
    <property type="term" value="C:cytochrome b6f complex"/>
    <property type="evidence" value="ECO:0007669"/>
    <property type="project" value="InterPro"/>
</dbReference>
<dbReference type="GO" id="GO:0045158">
    <property type="term" value="F:electron transporter, transferring electrons within cytochrome b6/f complex of photosystem II activity"/>
    <property type="evidence" value="ECO:0007669"/>
    <property type="project" value="UniProtKB-UniRule"/>
</dbReference>
<dbReference type="GO" id="GO:0015979">
    <property type="term" value="P:photosynthesis"/>
    <property type="evidence" value="ECO:0007669"/>
    <property type="project" value="UniProtKB-KW"/>
</dbReference>
<dbReference type="HAMAP" id="MF_00433">
    <property type="entry name" value="Cytb6_f_PetL"/>
    <property type="match status" value="1"/>
</dbReference>
<dbReference type="InterPro" id="IPR007802">
    <property type="entry name" value="Cyt_b6/f_cplx_su6"/>
</dbReference>
<dbReference type="Pfam" id="PF05115">
    <property type="entry name" value="PetL"/>
    <property type="match status" value="1"/>
</dbReference>
<keyword id="KW-0150">Chloroplast</keyword>
<keyword id="KW-0249">Electron transport</keyword>
<keyword id="KW-0472">Membrane</keyword>
<keyword id="KW-0602">Photosynthesis</keyword>
<keyword id="KW-0934">Plastid</keyword>
<keyword id="KW-0691">RNA editing</keyword>
<keyword id="KW-0793">Thylakoid</keyword>
<keyword id="KW-0812">Transmembrane</keyword>
<keyword id="KW-1133">Transmembrane helix</keyword>
<keyword id="KW-0813">Transport</keyword>
<feature type="chain" id="PRO_0000220432" description="Cytochrome b6-f complex subunit 6">
    <location>
        <begin position="1"/>
        <end position="31"/>
    </location>
</feature>
<feature type="transmembrane region" description="Helical" evidence="1">
    <location>
        <begin position="4"/>
        <end position="24"/>
    </location>
</feature>
<accession>Q85FK4</accession>
<organism>
    <name type="scientific">Adiantum capillus-veneris</name>
    <name type="common">Maidenhair fern</name>
    <dbReference type="NCBI Taxonomy" id="13818"/>
    <lineage>
        <taxon>Eukaryota</taxon>
        <taxon>Viridiplantae</taxon>
        <taxon>Streptophyta</taxon>
        <taxon>Embryophyta</taxon>
        <taxon>Tracheophyta</taxon>
        <taxon>Polypodiopsida</taxon>
        <taxon>Polypodiidae</taxon>
        <taxon>Polypodiales</taxon>
        <taxon>Pteridineae</taxon>
        <taxon>Pteridaceae</taxon>
        <taxon>Vittarioideae</taxon>
        <taxon>Adiantum</taxon>
    </lineage>
</organism>
<gene>
    <name evidence="1" type="primary">petL</name>
</gene>